<evidence type="ECO:0000255" key="1">
    <source>
        <dbReference type="HAMAP-Rule" id="MF_03043"/>
    </source>
</evidence>
<proteinExistence type="inferred from homology"/>
<sequence>MKFVIESLTKNSGRLGRLHIKDGAPGQRTPLLMQTTKGGSIPYLSADVFESHVTETPQLLELTLSTIDHMSEALAQWNSADRGLSDYIGFPGHLNVLLLRDPCETTPAGGNDRDIQPLFTRRGKESLSAQRYMEMVASLRPDIYQGLCDADTNAESAKKRVQKSVDRTEKFMHYIYEHKSKVDSTLLAPIVGGYNTFARTQSIKHALEQPSGSYGGYVFEGFHTNGLSATILDASKLLPIVEHCVGQLEEEKPRMVPGAYTPLTTLELIGLGMDLFDTSYAYCAAVNFKALTFTFVQDEVVHVPLLDITDDAIKEDFSPLLKNCDCLSCQKHTRAYVHHLYKTNELLGPILLMVHNLHHYMAFFEAIRESIARDGLPQLTELVRRQNGDSQVDYSIAPNRKVISKATMGKGFAAAAV</sequence>
<gene>
    <name type="ORF">GA17450</name>
</gene>
<dbReference type="EMBL" id="CH379070">
    <property type="protein sequence ID" value="EAL30112.1"/>
    <property type="molecule type" value="Genomic_DNA"/>
</dbReference>
<dbReference type="SMR" id="Q29EE9"/>
<dbReference type="FunCoup" id="Q29EE9">
    <property type="interactions" value="1556"/>
</dbReference>
<dbReference type="STRING" id="46245.Q29EE9"/>
<dbReference type="EnsemblMetazoa" id="FBtr0287939">
    <property type="protein sequence ID" value="FBpp0286377"/>
    <property type="gene ID" value="FBgn0077462"/>
</dbReference>
<dbReference type="KEGG" id="dpo:4812554"/>
<dbReference type="eggNOG" id="KOG3909">
    <property type="taxonomic scope" value="Eukaryota"/>
</dbReference>
<dbReference type="HOGENOM" id="CLU_037350_0_0_1"/>
<dbReference type="InParanoid" id="Q29EE9"/>
<dbReference type="OMA" id="MAGSRMK"/>
<dbReference type="PhylomeDB" id="Q29EE9"/>
<dbReference type="Proteomes" id="UP000001819">
    <property type="component" value="Chromosome X"/>
</dbReference>
<dbReference type="Bgee" id="FBgn0077462">
    <property type="expression patterns" value="Expressed in female reproductive system and 2 other cell types or tissues"/>
</dbReference>
<dbReference type="GO" id="GO:0005737">
    <property type="term" value="C:cytoplasm"/>
    <property type="evidence" value="ECO:0007669"/>
    <property type="project" value="UniProtKB-SubCell"/>
</dbReference>
<dbReference type="GO" id="GO:0046872">
    <property type="term" value="F:metal ion binding"/>
    <property type="evidence" value="ECO:0007669"/>
    <property type="project" value="UniProtKB-KW"/>
</dbReference>
<dbReference type="GO" id="GO:0008479">
    <property type="term" value="F:tRNA-guanosine(34) queuine transglycosylase activity"/>
    <property type="evidence" value="ECO:0007669"/>
    <property type="project" value="UniProtKB-UniRule"/>
</dbReference>
<dbReference type="GO" id="GO:0101030">
    <property type="term" value="P:tRNA-guanine transglycosylation"/>
    <property type="evidence" value="ECO:0007669"/>
    <property type="project" value="UniProtKB-UniRule"/>
</dbReference>
<dbReference type="FunFam" id="3.20.20.105:FF:000008">
    <property type="entry name" value="Queuine tRNA-ribosyltransferase accessory subunit 2"/>
    <property type="match status" value="1"/>
</dbReference>
<dbReference type="Gene3D" id="3.20.20.105">
    <property type="entry name" value="Queuine tRNA-ribosyltransferase-like"/>
    <property type="match status" value="1"/>
</dbReference>
<dbReference type="HAMAP" id="MF_03043">
    <property type="entry name" value="QTRT2"/>
    <property type="match status" value="1"/>
</dbReference>
<dbReference type="InterPro" id="IPR028592">
    <property type="entry name" value="QTRTD1"/>
</dbReference>
<dbReference type="InterPro" id="IPR050852">
    <property type="entry name" value="Queuine_tRNA-ribosyltrfase"/>
</dbReference>
<dbReference type="InterPro" id="IPR036511">
    <property type="entry name" value="TGT-like_sf"/>
</dbReference>
<dbReference type="InterPro" id="IPR002616">
    <property type="entry name" value="tRNA_ribo_trans-like"/>
</dbReference>
<dbReference type="NCBIfam" id="TIGR00449">
    <property type="entry name" value="tgt_general"/>
    <property type="match status" value="1"/>
</dbReference>
<dbReference type="PANTHER" id="PTHR46064">
    <property type="entry name" value="QUEUINE TRNA-RIBOSYLTRANSFERASE ACCESSORY SUBUNIT 2"/>
    <property type="match status" value="1"/>
</dbReference>
<dbReference type="PANTHER" id="PTHR46064:SF1">
    <property type="entry name" value="QUEUINE TRNA-RIBOSYLTRANSFERASE ACCESSORY SUBUNIT 2"/>
    <property type="match status" value="1"/>
</dbReference>
<dbReference type="Pfam" id="PF01702">
    <property type="entry name" value="TGT"/>
    <property type="match status" value="1"/>
</dbReference>
<dbReference type="SUPFAM" id="SSF51713">
    <property type="entry name" value="tRNA-guanine transglycosylase"/>
    <property type="match status" value="1"/>
</dbReference>
<organism>
    <name type="scientific">Drosophila pseudoobscura pseudoobscura</name>
    <name type="common">Fruit fly</name>
    <dbReference type="NCBI Taxonomy" id="46245"/>
    <lineage>
        <taxon>Eukaryota</taxon>
        <taxon>Metazoa</taxon>
        <taxon>Ecdysozoa</taxon>
        <taxon>Arthropoda</taxon>
        <taxon>Hexapoda</taxon>
        <taxon>Insecta</taxon>
        <taxon>Pterygota</taxon>
        <taxon>Neoptera</taxon>
        <taxon>Endopterygota</taxon>
        <taxon>Diptera</taxon>
        <taxon>Brachycera</taxon>
        <taxon>Muscomorpha</taxon>
        <taxon>Ephydroidea</taxon>
        <taxon>Drosophilidae</taxon>
        <taxon>Drosophila</taxon>
        <taxon>Sophophora</taxon>
    </lineage>
</organism>
<protein>
    <recommendedName>
        <fullName evidence="1">Queuine tRNA-ribosyltransferase accessory subunit 2</fullName>
    </recommendedName>
    <alternativeName>
        <fullName evidence="1">Queuine tRNA-ribosyltransferase domain-containing protein 1</fullName>
    </alternativeName>
</protein>
<keyword id="KW-0963">Cytoplasm</keyword>
<keyword id="KW-0479">Metal-binding</keyword>
<keyword id="KW-1185">Reference proteome</keyword>
<keyword id="KW-0819">tRNA processing</keyword>
<keyword id="KW-0862">Zinc</keyword>
<reference key="1">
    <citation type="journal article" date="2005" name="Genome Res.">
        <title>Comparative genome sequencing of Drosophila pseudoobscura: chromosomal, gene, and cis-element evolution.</title>
        <authorList>
            <person name="Richards S."/>
            <person name="Liu Y."/>
            <person name="Bettencourt B.R."/>
            <person name="Hradecky P."/>
            <person name="Letovsky S."/>
            <person name="Nielsen R."/>
            <person name="Thornton K."/>
            <person name="Hubisz M.J."/>
            <person name="Chen R."/>
            <person name="Meisel R.P."/>
            <person name="Couronne O."/>
            <person name="Hua S."/>
            <person name="Smith M.A."/>
            <person name="Zhang P."/>
            <person name="Liu J."/>
            <person name="Bussemaker H.J."/>
            <person name="van Batenburg M.F."/>
            <person name="Howells S.L."/>
            <person name="Scherer S.E."/>
            <person name="Sodergren E."/>
            <person name="Matthews B.B."/>
            <person name="Crosby M.A."/>
            <person name="Schroeder A.J."/>
            <person name="Ortiz-Barrientos D."/>
            <person name="Rives C.M."/>
            <person name="Metzker M.L."/>
            <person name="Muzny D.M."/>
            <person name="Scott G."/>
            <person name="Steffen D."/>
            <person name="Wheeler D.A."/>
            <person name="Worley K.C."/>
            <person name="Havlak P."/>
            <person name="Durbin K.J."/>
            <person name="Egan A."/>
            <person name="Gill R."/>
            <person name="Hume J."/>
            <person name="Morgan M.B."/>
            <person name="Miner G."/>
            <person name="Hamilton C."/>
            <person name="Huang Y."/>
            <person name="Waldron L."/>
            <person name="Verduzco D."/>
            <person name="Clerc-Blankenburg K.P."/>
            <person name="Dubchak I."/>
            <person name="Noor M.A.F."/>
            <person name="Anderson W."/>
            <person name="White K.P."/>
            <person name="Clark A.G."/>
            <person name="Schaeffer S.W."/>
            <person name="Gelbart W.M."/>
            <person name="Weinstock G.M."/>
            <person name="Gibbs R.A."/>
        </authorList>
    </citation>
    <scope>NUCLEOTIDE SEQUENCE [LARGE SCALE GENOMIC DNA]</scope>
    <source>
        <strain>MV2-25 / Tucson 14011-0121.94</strain>
    </source>
</reference>
<comment type="function">
    <text evidence="1">Non-catalytic subunit of the queuine tRNA-ribosyltransferase (TGT) that catalyzes the base-exchange of a guanine (G) residue with queuine (Q) at position 34 (anticodon wobble position) in tRNAs with GU(N) anticodons (tRNA-Asp, -Asn, -His and -Tyr), resulting in the hypermodified nucleoside queuosine (7-(((4,5-cis-dihydroxy-2-cyclopenten-1-yl)amino)methyl)-7-deazaguanosine).</text>
</comment>
<comment type="cofactor">
    <cofactor evidence="1">
        <name>Zn(2+)</name>
        <dbReference type="ChEBI" id="CHEBI:29105"/>
    </cofactor>
    <text evidence="1">Binds 1 zinc ion per subunit.</text>
</comment>
<comment type="subunit">
    <text evidence="1">Heterodimer of a catalytic subunit and an accessory subunit.</text>
</comment>
<comment type="subcellular location">
    <subcellularLocation>
        <location evidence="1">Cytoplasm</location>
    </subcellularLocation>
</comment>
<comment type="similarity">
    <text evidence="1">Belongs to the queuine tRNA-ribosyltransferase family. QTRT2 subfamily.</text>
</comment>
<accession>Q29EE9</accession>
<name>QTRT2_DROPS</name>
<feature type="chain" id="PRO_0000383939" description="Queuine tRNA-ribosyltransferase accessory subunit 2">
    <location>
        <begin position="1"/>
        <end position="417"/>
    </location>
</feature>
<feature type="binding site" evidence="1">
    <location>
        <position position="324"/>
    </location>
    <ligand>
        <name>Zn(2+)</name>
        <dbReference type="ChEBI" id="CHEBI:29105"/>
    </ligand>
</feature>
<feature type="binding site" evidence="1">
    <location>
        <position position="326"/>
    </location>
    <ligand>
        <name>Zn(2+)</name>
        <dbReference type="ChEBI" id="CHEBI:29105"/>
    </ligand>
</feature>
<feature type="binding site" evidence="1">
    <location>
        <position position="329"/>
    </location>
    <ligand>
        <name>Zn(2+)</name>
        <dbReference type="ChEBI" id="CHEBI:29105"/>
    </ligand>
</feature>
<feature type="binding site" evidence="1">
    <location>
        <position position="355"/>
    </location>
    <ligand>
        <name>Zn(2+)</name>
        <dbReference type="ChEBI" id="CHEBI:29105"/>
    </ligand>
</feature>